<sequence>MGANQLVVLNVYDMYWMNEYTSSIGIGVFHSGIEVYGREFAYGGHPYPFSGIFEISPGNAAELGETFKFKEAVVLGSTDFLEDDIEKIVEELGKEYKGNAYHLMHKNCNHFSSALSEILCGKEIPRWINRLAYFSSCIPFLQSCLPKEWLTPAALQSSVSQELQDELEEAEDAAASTAMASAAAGGRTGRHTKL</sequence>
<accession>Q5XIT6</accession>
<comment type="function">
    <text evidence="1">Has deubiquitinating activity towards 'Lys-48'- and 'Lys-63'-linked polyubiquitin chains. Deubiquitinates 'Lys-48'-linked polyubiquitination of RPS7 leading to its stabilization. Exhibits palmitoyl protein thioesterase (S-depalmitoylation) activity towards synthetic substrates 4-methylumbelliferyl-6-S-palmitoyl-beta-D-glucopyranoside and S-depalmitoylation probe 5 (DPP-5).</text>
</comment>
<comment type="catalytic activity">
    <reaction evidence="1">
        <text>Thiol-dependent hydrolysis of ester, thioester, amide, peptide and isopeptide bonds formed by the C-terminal Gly of ubiquitin (a 76-residue protein attached to proteins as an intracellular targeting signal).</text>
        <dbReference type="EC" id="3.4.19.12"/>
    </reaction>
</comment>
<comment type="catalytic activity">
    <reaction evidence="1">
        <text>S-hexadecanoyl-L-cysteinyl-[protein] + H2O = L-cysteinyl-[protein] + hexadecanoate + H(+)</text>
        <dbReference type="Rhea" id="RHEA:19233"/>
        <dbReference type="Rhea" id="RHEA-COMP:10131"/>
        <dbReference type="Rhea" id="RHEA-COMP:11032"/>
        <dbReference type="ChEBI" id="CHEBI:7896"/>
        <dbReference type="ChEBI" id="CHEBI:15377"/>
        <dbReference type="ChEBI" id="CHEBI:15378"/>
        <dbReference type="ChEBI" id="CHEBI:29950"/>
        <dbReference type="ChEBI" id="CHEBI:74151"/>
        <dbReference type="EC" id="3.1.2.22"/>
    </reaction>
    <physiologicalReaction direction="left-to-right" evidence="1">
        <dbReference type="Rhea" id="RHEA:19234"/>
    </physiologicalReaction>
</comment>
<comment type="subunit">
    <text evidence="1">Interacts with RPS7.</text>
</comment>
<comment type="subcellular location">
    <subcellularLocation>
        <location evidence="2">Cytoplasm</location>
    </subcellularLocation>
</comment>
<comment type="similarity">
    <text evidence="5">Belongs to the DeSI family.</text>
</comment>
<feature type="chain" id="PRO_0000317725" description="Deubiquitinase DESI2">
    <location>
        <begin position="1"/>
        <end position="194"/>
    </location>
</feature>
<feature type="domain" description="PPPDE" evidence="3">
    <location>
        <begin position="5"/>
        <end position="149"/>
    </location>
</feature>
<feature type="region of interest" description="Disordered" evidence="4">
    <location>
        <begin position="166"/>
        <end position="194"/>
    </location>
</feature>
<feature type="compositionally biased region" description="Low complexity" evidence="4">
    <location>
        <begin position="173"/>
        <end position="184"/>
    </location>
</feature>
<feature type="active site" evidence="3">
    <location>
        <position position="30"/>
    </location>
</feature>
<feature type="active site" evidence="1 3">
    <location>
        <position position="108"/>
    </location>
</feature>
<proteinExistence type="evidence at transcript level"/>
<name>DESI2_RAT</name>
<organism>
    <name type="scientific">Rattus norvegicus</name>
    <name type="common">Rat</name>
    <dbReference type="NCBI Taxonomy" id="10116"/>
    <lineage>
        <taxon>Eukaryota</taxon>
        <taxon>Metazoa</taxon>
        <taxon>Chordata</taxon>
        <taxon>Craniata</taxon>
        <taxon>Vertebrata</taxon>
        <taxon>Euteleostomi</taxon>
        <taxon>Mammalia</taxon>
        <taxon>Eutheria</taxon>
        <taxon>Euarchontoglires</taxon>
        <taxon>Glires</taxon>
        <taxon>Rodentia</taxon>
        <taxon>Myomorpha</taxon>
        <taxon>Muroidea</taxon>
        <taxon>Muridae</taxon>
        <taxon>Murinae</taxon>
        <taxon>Rattus</taxon>
    </lineage>
</organism>
<keyword id="KW-0963">Cytoplasm</keyword>
<keyword id="KW-0378">Hydrolase</keyword>
<keyword id="KW-0645">Protease</keyword>
<keyword id="KW-1185">Reference proteome</keyword>
<keyword id="KW-0833">Ubl conjugation pathway</keyword>
<reference key="1">
    <citation type="journal article" date="2004" name="Genome Res.">
        <title>The status, quality, and expansion of the NIH full-length cDNA project: the Mammalian Gene Collection (MGC).</title>
        <authorList>
            <consortium name="The MGC Project Team"/>
        </authorList>
    </citation>
    <scope>NUCLEOTIDE SEQUENCE [LARGE SCALE MRNA]</scope>
    <source>
        <tissue>Testis</tissue>
    </source>
</reference>
<dbReference type="EC" id="3.4.19.12" evidence="1"/>
<dbReference type="EC" id="3.1.2.22" evidence="1"/>
<dbReference type="EMBL" id="BC083584">
    <property type="protein sequence ID" value="AAH83584.1"/>
    <property type="molecule type" value="mRNA"/>
</dbReference>
<dbReference type="RefSeq" id="NP_001013895.1">
    <property type="nucleotide sequence ID" value="NM_001013873.1"/>
</dbReference>
<dbReference type="SMR" id="Q5XIT6"/>
<dbReference type="FunCoup" id="Q5XIT6">
    <property type="interactions" value="2814"/>
</dbReference>
<dbReference type="STRING" id="10116.ENSRNOP00000005967"/>
<dbReference type="MEROPS" id="C97.002"/>
<dbReference type="PhosphoSitePlus" id="Q5XIT6"/>
<dbReference type="PaxDb" id="10116-ENSRNOP00000005967"/>
<dbReference type="Ensembl" id="ENSRNOT00000005967.8">
    <property type="protein sequence ID" value="ENSRNOP00000005967.5"/>
    <property type="gene ID" value="ENSRNOG00000004524.8"/>
</dbReference>
<dbReference type="GeneID" id="289277"/>
<dbReference type="KEGG" id="rno:289277"/>
<dbReference type="UCSC" id="RGD:1359392">
    <property type="organism name" value="rat"/>
</dbReference>
<dbReference type="AGR" id="RGD:1359392"/>
<dbReference type="CTD" id="51029"/>
<dbReference type="RGD" id="1359392">
    <property type="gene designation" value="Desi2"/>
</dbReference>
<dbReference type="eggNOG" id="KOG0324">
    <property type="taxonomic scope" value="Eukaryota"/>
</dbReference>
<dbReference type="GeneTree" id="ENSGT00730000111005"/>
<dbReference type="HOGENOM" id="CLU_069001_5_1_1"/>
<dbReference type="InParanoid" id="Q5XIT6"/>
<dbReference type="OrthoDB" id="49675at9989"/>
<dbReference type="PhylomeDB" id="Q5XIT6"/>
<dbReference type="PRO" id="PR:Q5XIT6"/>
<dbReference type="Proteomes" id="UP000002494">
    <property type="component" value="Chromosome 13"/>
</dbReference>
<dbReference type="Bgee" id="ENSRNOG00000004524">
    <property type="expression patterns" value="Expressed in testis and 19 other cell types or tissues"/>
</dbReference>
<dbReference type="ExpressionAtlas" id="Q5XIT6">
    <property type="expression patterns" value="baseline and differential"/>
</dbReference>
<dbReference type="GO" id="GO:0005737">
    <property type="term" value="C:cytoplasm"/>
    <property type="evidence" value="ECO:0000250"/>
    <property type="project" value="UniProtKB"/>
</dbReference>
<dbReference type="GO" id="GO:0004843">
    <property type="term" value="F:cysteine-type deubiquitinase activity"/>
    <property type="evidence" value="ECO:0000266"/>
    <property type="project" value="RGD"/>
</dbReference>
<dbReference type="GO" id="GO:0101005">
    <property type="term" value="F:deubiquitinase activity"/>
    <property type="evidence" value="ECO:0000318"/>
    <property type="project" value="GO_Central"/>
</dbReference>
<dbReference type="GO" id="GO:1990380">
    <property type="term" value="F:K48-linked deubiquitinase activity"/>
    <property type="evidence" value="ECO:0000250"/>
    <property type="project" value="UniProtKB"/>
</dbReference>
<dbReference type="GO" id="GO:0061578">
    <property type="term" value="F:K63-linked deubiquitinase activity"/>
    <property type="evidence" value="ECO:0000250"/>
    <property type="project" value="UniProtKB"/>
</dbReference>
<dbReference type="GO" id="GO:0052816">
    <property type="term" value="F:long-chain fatty acyl-CoA hydrolase activity"/>
    <property type="evidence" value="ECO:0000250"/>
    <property type="project" value="UniProtKB"/>
</dbReference>
<dbReference type="GO" id="GO:0008474">
    <property type="term" value="F:palmitoyl-(protein) hydrolase activity"/>
    <property type="evidence" value="ECO:0007669"/>
    <property type="project" value="RHEA"/>
</dbReference>
<dbReference type="GO" id="GO:0006508">
    <property type="term" value="P:proteolysis"/>
    <property type="evidence" value="ECO:0007669"/>
    <property type="project" value="UniProtKB-KW"/>
</dbReference>
<dbReference type="FunFam" id="3.90.1720.30:FF:000001">
    <property type="entry name" value="desumoylating isopeptidase 2"/>
    <property type="match status" value="1"/>
</dbReference>
<dbReference type="Gene3D" id="3.90.1720.30">
    <property type="entry name" value="PPPDE domains"/>
    <property type="match status" value="1"/>
</dbReference>
<dbReference type="InterPro" id="IPR008580">
    <property type="entry name" value="PPPDE_dom"/>
</dbReference>
<dbReference type="InterPro" id="IPR042266">
    <property type="entry name" value="PPPDE_sf"/>
</dbReference>
<dbReference type="PANTHER" id="PTHR12378">
    <property type="entry name" value="DESUMOYLATING ISOPEPTIDASE"/>
    <property type="match status" value="1"/>
</dbReference>
<dbReference type="PANTHER" id="PTHR12378:SF6">
    <property type="entry name" value="DEUBIQUITINASE DESI2"/>
    <property type="match status" value="1"/>
</dbReference>
<dbReference type="Pfam" id="PF05903">
    <property type="entry name" value="Peptidase_C97"/>
    <property type="match status" value="1"/>
</dbReference>
<dbReference type="SMART" id="SM01179">
    <property type="entry name" value="DUF862"/>
    <property type="match status" value="1"/>
</dbReference>
<dbReference type="PROSITE" id="PS51858">
    <property type="entry name" value="PPPDE"/>
    <property type="match status" value="1"/>
</dbReference>
<protein>
    <recommendedName>
        <fullName evidence="1">Deubiquitinase DESI2</fullName>
        <ecNumber evidence="1">3.4.19.12</ecNumber>
    </recommendedName>
    <alternativeName>
        <fullName>Desumoylating isopeptidase 2</fullName>
        <shortName>DeSI-2</shortName>
    </alternativeName>
    <alternativeName>
        <fullName>PPPDE peptidase domain-containing protein 1</fullName>
    </alternativeName>
    <alternativeName>
        <fullName>Palmitoyl protein thioesterase DESI2</fullName>
        <ecNumber evidence="1">3.1.2.22</ecNumber>
    </alternativeName>
    <alternativeName>
        <fullName>Protein FAM152A</fullName>
    </alternativeName>
    <alternativeName>
        <fullName>S-depalmitoylase DESI2</fullName>
    </alternativeName>
</protein>
<evidence type="ECO:0000250" key="1">
    <source>
        <dbReference type="UniProtKB" id="Q9BSY9"/>
    </source>
</evidence>
<evidence type="ECO:0000250" key="2">
    <source>
        <dbReference type="UniProtKB" id="Q9D291"/>
    </source>
</evidence>
<evidence type="ECO:0000255" key="3">
    <source>
        <dbReference type="PROSITE-ProRule" id="PRU01205"/>
    </source>
</evidence>
<evidence type="ECO:0000256" key="4">
    <source>
        <dbReference type="SAM" id="MobiDB-lite"/>
    </source>
</evidence>
<evidence type="ECO:0000305" key="5"/>
<gene>
    <name type="primary">Desi2</name>
    <name type="synonym">Fam152a</name>
    <name type="synonym">Pppde1</name>
</gene>